<evidence type="ECO:0000250" key="1"/>
<evidence type="ECO:0000255" key="2"/>
<evidence type="ECO:0000305" key="3"/>
<comment type="function">
    <text evidence="1">Probable ion channel inhibitor.</text>
</comment>
<comment type="subcellular location">
    <subcellularLocation>
        <location evidence="1">Secreted</location>
    </subcellularLocation>
</comment>
<comment type="tissue specificity">
    <text>Expressed by the venom gland.</text>
</comment>
<comment type="domain">
    <text evidence="1">The presence of a 'disulfide through disulfide knot' structurally defines this protein as a knottin.</text>
</comment>
<comment type="similarity">
    <text evidence="3">Belongs to the neurotoxin 14 (magi-1) family. 01 (HNTX-16) subfamily.</text>
</comment>
<dbReference type="EMBL" id="GU292968">
    <property type="protein sequence ID" value="ADB56784.1"/>
    <property type="molecule type" value="mRNA"/>
</dbReference>
<dbReference type="ArachnoServer" id="AS001552">
    <property type="toxin name" value="U11-theraphotoxin-Hhn1u"/>
</dbReference>
<dbReference type="GO" id="GO:0005576">
    <property type="term" value="C:extracellular region"/>
    <property type="evidence" value="ECO:0007669"/>
    <property type="project" value="UniProtKB-SubCell"/>
</dbReference>
<dbReference type="GO" id="GO:0019871">
    <property type="term" value="F:sodium channel inhibitor activity"/>
    <property type="evidence" value="ECO:0007669"/>
    <property type="project" value="InterPro"/>
</dbReference>
<dbReference type="GO" id="GO:0090729">
    <property type="term" value="F:toxin activity"/>
    <property type="evidence" value="ECO:0007669"/>
    <property type="project" value="UniProtKB-KW"/>
</dbReference>
<dbReference type="InterPro" id="IPR012627">
    <property type="entry name" value="Toxin_22"/>
</dbReference>
<dbReference type="Pfam" id="PF08092">
    <property type="entry name" value="Toxin_22"/>
    <property type="match status" value="1"/>
</dbReference>
<proteinExistence type="evidence at transcript level"/>
<organism>
    <name type="scientific">Cyriopagopus hainanus</name>
    <name type="common">Chinese bird spider</name>
    <name type="synonym">Haplopelma hainanum</name>
    <dbReference type="NCBI Taxonomy" id="209901"/>
    <lineage>
        <taxon>Eukaryota</taxon>
        <taxon>Metazoa</taxon>
        <taxon>Ecdysozoa</taxon>
        <taxon>Arthropoda</taxon>
        <taxon>Chelicerata</taxon>
        <taxon>Arachnida</taxon>
        <taxon>Araneae</taxon>
        <taxon>Mygalomorphae</taxon>
        <taxon>Theraphosidae</taxon>
        <taxon>Haplopelma</taxon>
    </lineage>
</organism>
<name>H16U1_CYRHA</name>
<accession>D2Y291</accession>
<protein>
    <recommendedName>
        <fullName>U11-theraphotoxin-Hhn1u</fullName>
        <shortName>U11-TRTX-Hhn1u</shortName>
    </recommendedName>
    <alternativeName>
        <fullName>Hainantoxin-XVI-21</fullName>
        <shortName>HNTX-XVI-21</shortName>
    </alternativeName>
</protein>
<feature type="signal peptide" evidence="2">
    <location>
        <begin position="1"/>
        <end position="21"/>
    </location>
</feature>
<feature type="propeptide" id="PRO_0000400957" evidence="1">
    <location>
        <begin position="22"/>
        <end position="74"/>
    </location>
</feature>
<feature type="peptide" id="PRO_0000400958" description="U11-theraphotoxin-Hhn1u">
    <location>
        <begin position="75"/>
        <end position="113"/>
    </location>
</feature>
<feature type="disulfide bond" evidence="1">
    <location>
        <begin position="75"/>
        <end position="90"/>
    </location>
</feature>
<feature type="disulfide bond" evidence="1">
    <location>
        <begin position="82"/>
        <end position="95"/>
    </location>
</feature>
<feature type="disulfide bond" evidence="1">
    <location>
        <begin position="89"/>
        <end position="110"/>
    </location>
</feature>
<sequence>MNTVRVTFLLVFVLAVSLGQADKDENRMEMQEKTEQGKSYLDFAENLLLQKLEELEAKLLEEDSEESRNSRQKRCIGEGVPCDENVPRCCSGLVCLKPTLHGIWYKSYYCYKK</sequence>
<reference key="1">
    <citation type="journal article" date="2010" name="J. Proteome Res.">
        <title>Molecular diversification of peptide toxins from the tarantula Haplopelma hainanum (Ornithoctonus hainana) venom based on transcriptomic, peptidomic, and genomic analyses.</title>
        <authorList>
            <person name="Tang X."/>
            <person name="Zhang Y."/>
            <person name="Hu W."/>
            <person name="Xu D."/>
            <person name="Tao H."/>
            <person name="Yang X."/>
            <person name="Li Y."/>
            <person name="Jiang L."/>
            <person name="Liang S."/>
        </authorList>
    </citation>
    <scope>NUCLEOTIDE SEQUENCE [LARGE SCALE MRNA]</scope>
    <source>
        <tissue>Venom gland</tissue>
    </source>
</reference>
<keyword id="KW-1015">Disulfide bond</keyword>
<keyword id="KW-0872">Ion channel impairing toxin</keyword>
<keyword id="KW-0960">Knottin</keyword>
<keyword id="KW-0964">Secreted</keyword>
<keyword id="KW-0732">Signal</keyword>
<keyword id="KW-0800">Toxin</keyword>